<keyword id="KW-0030">Aminoacyl-tRNA synthetase</keyword>
<keyword id="KW-0067">ATP-binding</keyword>
<keyword id="KW-0963">Cytoplasm</keyword>
<keyword id="KW-0436">Ligase</keyword>
<keyword id="KW-0547">Nucleotide-binding</keyword>
<keyword id="KW-0648">Protein biosynthesis</keyword>
<keyword id="KW-1185">Reference proteome</keyword>
<evidence type="ECO:0000255" key="1">
    <source>
        <dbReference type="HAMAP-Rule" id="MF_00022"/>
    </source>
</evidence>
<evidence type="ECO:0000256" key="2">
    <source>
        <dbReference type="SAM" id="MobiDB-lite"/>
    </source>
</evidence>
<feature type="chain" id="PRO_0000330953" description="Glutamate--tRNA ligase">
    <location>
        <begin position="1"/>
        <end position="467"/>
    </location>
</feature>
<feature type="region of interest" description="Disordered" evidence="2">
    <location>
        <begin position="114"/>
        <end position="140"/>
    </location>
</feature>
<feature type="short sequence motif" description="'HIGH' region" evidence="1">
    <location>
        <begin position="12"/>
        <end position="22"/>
    </location>
</feature>
<feature type="short sequence motif" description="'KMSKS' region" evidence="1">
    <location>
        <begin position="244"/>
        <end position="248"/>
    </location>
</feature>
<feature type="compositionally biased region" description="Basic and acidic residues" evidence="2">
    <location>
        <begin position="114"/>
        <end position="128"/>
    </location>
</feature>
<feature type="binding site" evidence="1">
    <location>
        <position position="247"/>
    </location>
    <ligand>
        <name>ATP</name>
        <dbReference type="ChEBI" id="CHEBI:30616"/>
    </ligand>
</feature>
<proteinExistence type="inferred from homology"/>
<sequence>MAATPVRTRFAPSPTGYLHIGGARTALFSWAYARRHGGRFILRIEDTDVARSTPEAVQAILDGMKWLGLEHDEGPFYQMQRMDRYKEVIQQMLAAGTAYYCYTSKEELDALRAEQEAKKEKPRYDGRWRPAPGKTLPTPPAGVQPVVRFCNPTTGVVAWDDLVKGRIEISNTELDDFIIARADGTPTYNFCVVVDDWDMGITQVIRGDDHVNNTPRQINVLQALGASVPQYAHLSMILGDDGTKLSKRHGAVSVMQYDDEGYLPEAVINYLARLGWSHGDDEIFSREQFVEWFDLDHITPSAAQFNTEKLNWLNAHYIKQADNAYLAAEVANRLARRGVDPEAGPALEQVVALYKDRSANLNELADAAELFCVDVHAAPEVIAQHLTDTARAALASLRARFEAVAWDKAALNQAIKDTMAEHGLKMPQVAIPLRVALLGVPQTPSIDAVVEVLGRERVLARLARHLG</sequence>
<dbReference type="EC" id="6.1.1.17" evidence="1"/>
<dbReference type="EMBL" id="AM406670">
    <property type="protein sequence ID" value="CAL94096.1"/>
    <property type="molecule type" value="Genomic_DNA"/>
</dbReference>
<dbReference type="RefSeq" id="WP_011765212.1">
    <property type="nucleotide sequence ID" value="NC_008702.1"/>
</dbReference>
<dbReference type="SMR" id="A1K5J1"/>
<dbReference type="STRING" id="62928.azo1479"/>
<dbReference type="KEGG" id="azo:azo1479"/>
<dbReference type="eggNOG" id="COG0008">
    <property type="taxonomic scope" value="Bacteria"/>
</dbReference>
<dbReference type="HOGENOM" id="CLU_015768_6_3_4"/>
<dbReference type="Proteomes" id="UP000002588">
    <property type="component" value="Chromosome"/>
</dbReference>
<dbReference type="GO" id="GO:0005829">
    <property type="term" value="C:cytosol"/>
    <property type="evidence" value="ECO:0007669"/>
    <property type="project" value="TreeGrafter"/>
</dbReference>
<dbReference type="GO" id="GO:0005524">
    <property type="term" value="F:ATP binding"/>
    <property type="evidence" value="ECO:0007669"/>
    <property type="project" value="UniProtKB-UniRule"/>
</dbReference>
<dbReference type="GO" id="GO:0004818">
    <property type="term" value="F:glutamate-tRNA ligase activity"/>
    <property type="evidence" value="ECO:0007669"/>
    <property type="project" value="UniProtKB-UniRule"/>
</dbReference>
<dbReference type="GO" id="GO:0000049">
    <property type="term" value="F:tRNA binding"/>
    <property type="evidence" value="ECO:0007669"/>
    <property type="project" value="InterPro"/>
</dbReference>
<dbReference type="GO" id="GO:0008270">
    <property type="term" value="F:zinc ion binding"/>
    <property type="evidence" value="ECO:0007669"/>
    <property type="project" value="InterPro"/>
</dbReference>
<dbReference type="GO" id="GO:0006424">
    <property type="term" value="P:glutamyl-tRNA aminoacylation"/>
    <property type="evidence" value="ECO:0007669"/>
    <property type="project" value="UniProtKB-UniRule"/>
</dbReference>
<dbReference type="CDD" id="cd00808">
    <property type="entry name" value="GluRS_core"/>
    <property type="match status" value="1"/>
</dbReference>
<dbReference type="FunFam" id="3.40.50.620:FF:000007">
    <property type="entry name" value="Glutamate--tRNA ligase"/>
    <property type="match status" value="1"/>
</dbReference>
<dbReference type="Gene3D" id="1.10.10.350">
    <property type="match status" value="1"/>
</dbReference>
<dbReference type="Gene3D" id="3.40.50.620">
    <property type="entry name" value="HUPs"/>
    <property type="match status" value="1"/>
</dbReference>
<dbReference type="HAMAP" id="MF_00022">
    <property type="entry name" value="Glu_tRNA_synth_type1"/>
    <property type="match status" value="1"/>
</dbReference>
<dbReference type="InterPro" id="IPR045462">
    <property type="entry name" value="aa-tRNA-synth_I_cd-bd"/>
</dbReference>
<dbReference type="InterPro" id="IPR020751">
    <property type="entry name" value="aa-tRNA-synth_I_codon-bd_sub2"/>
</dbReference>
<dbReference type="InterPro" id="IPR001412">
    <property type="entry name" value="aa-tRNA-synth_I_CS"/>
</dbReference>
<dbReference type="InterPro" id="IPR008925">
    <property type="entry name" value="aa_tRNA-synth_I_cd-bd_sf"/>
</dbReference>
<dbReference type="InterPro" id="IPR004527">
    <property type="entry name" value="Glu-tRNA-ligase_bac/mito"/>
</dbReference>
<dbReference type="InterPro" id="IPR000924">
    <property type="entry name" value="Glu/Gln-tRNA-synth"/>
</dbReference>
<dbReference type="InterPro" id="IPR020058">
    <property type="entry name" value="Glu/Gln-tRNA-synth_Ib_cat-dom"/>
</dbReference>
<dbReference type="InterPro" id="IPR049940">
    <property type="entry name" value="GluQ/Sye"/>
</dbReference>
<dbReference type="InterPro" id="IPR033910">
    <property type="entry name" value="GluRS_core"/>
</dbReference>
<dbReference type="InterPro" id="IPR014729">
    <property type="entry name" value="Rossmann-like_a/b/a_fold"/>
</dbReference>
<dbReference type="NCBIfam" id="TIGR00464">
    <property type="entry name" value="gltX_bact"/>
    <property type="match status" value="1"/>
</dbReference>
<dbReference type="PANTHER" id="PTHR43311">
    <property type="entry name" value="GLUTAMATE--TRNA LIGASE"/>
    <property type="match status" value="1"/>
</dbReference>
<dbReference type="PANTHER" id="PTHR43311:SF2">
    <property type="entry name" value="GLUTAMATE--TRNA LIGASE, MITOCHONDRIAL-RELATED"/>
    <property type="match status" value="1"/>
</dbReference>
<dbReference type="Pfam" id="PF19269">
    <property type="entry name" value="Anticodon_2"/>
    <property type="match status" value="1"/>
</dbReference>
<dbReference type="Pfam" id="PF00749">
    <property type="entry name" value="tRNA-synt_1c"/>
    <property type="match status" value="1"/>
</dbReference>
<dbReference type="PRINTS" id="PR00987">
    <property type="entry name" value="TRNASYNTHGLU"/>
</dbReference>
<dbReference type="SUPFAM" id="SSF48163">
    <property type="entry name" value="An anticodon-binding domain of class I aminoacyl-tRNA synthetases"/>
    <property type="match status" value="1"/>
</dbReference>
<dbReference type="SUPFAM" id="SSF52374">
    <property type="entry name" value="Nucleotidylyl transferase"/>
    <property type="match status" value="1"/>
</dbReference>
<dbReference type="PROSITE" id="PS00178">
    <property type="entry name" value="AA_TRNA_LIGASE_I"/>
    <property type="match status" value="1"/>
</dbReference>
<comment type="function">
    <text evidence="1">Catalyzes the attachment of glutamate to tRNA(Glu) in a two-step reaction: glutamate is first activated by ATP to form Glu-AMP and then transferred to the acceptor end of tRNA(Glu).</text>
</comment>
<comment type="catalytic activity">
    <reaction evidence="1">
        <text>tRNA(Glu) + L-glutamate + ATP = L-glutamyl-tRNA(Glu) + AMP + diphosphate</text>
        <dbReference type="Rhea" id="RHEA:23540"/>
        <dbReference type="Rhea" id="RHEA-COMP:9663"/>
        <dbReference type="Rhea" id="RHEA-COMP:9680"/>
        <dbReference type="ChEBI" id="CHEBI:29985"/>
        <dbReference type="ChEBI" id="CHEBI:30616"/>
        <dbReference type="ChEBI" id="CHEBI:33019"/>
        <dbReference type="ChEBI" id="CHEBI:78442"/>
        <dbReference type="ChEBI" id="CHEBI:78520"/>
        <dbReference type="ChEBI" id="CHEBI:456215"/>
        <dbReference type="EC" id="6.1.1.17"/>
    </reaction>
</comment>
<comment type="subunit">
    <text evidence="1">Monomer.</text>
</comment>
<comment type="subcellular location">
    <subcellularLocation>
        <location evidence="1">Cytoplasm</location>
    </subcellularLocation>
</comment>
<comment type="similarity">
    <text evidence="1">Belongs to the class-I aminoacyl-tRNA synthetase family. Glutamate--tRNA ligase type 1 subfamily.</text>
</comment>
<accession>A1K5J1</accession>
<name>SYE_AZOSB</name>
<gene>
    <name evidence="1" type="primary">gltX</name>
    <name type="ordered locus">azo1479</name>
</gene>
<organism>
    <name type="scientific">Azoarcus sp. (strain BH72)</name>
    <dbReference type="NCBI Taxonomy" id="418699"/>
    <lineage>
        <taxon>Bacteria</taxon>
        <taxon>Pseudomonadati</taxon>
        <taxon>Pseudomonadota</taxon>
        <taxon>Betaproteobacteria</taxon>
        <taxon>Rhodocyclales</taxon>
        <taxon>Zoogloeaceae</taxon>
        <taxon>Azoarcus</taxon>
    </lineage>
</organism>
<reference key="1">
    <citation type="journal article" date="2006" name="Nat. Biotechnol.">
        <title>Complete genome of the mutualistic, N2-fixing grass endophyte Azoarcus sp. strain BH72.</title>
        <authorList>
            <person name="Krause A."/>
            <person name="Ramakumar A."/>
            <person name="Bartels D."/>
            <person name="Battistoni F."/>
            <person name="Bekel T."/>
            <person name="Boch J."/>
            <person name="Boehm M."/>
            <person name="Friedrich F."/>
            <person name="Hurek T."/>
            <person name="Krause L."/>
            <person name="Linke B."/>
            <person name="McHardy A.C."/>
            <person name="Sarkar A."/>
            <person name="Schneiker S."/>
            <person name="Syed A.A."/>
            <person name="Thauer R."/>
            <person name="Vorhoelter F.-J."/>
            <person name="Weidner S."/>
            <person name="Puehler A."/>
            <person name="Reinhold-Hurek B."/>
            <person name="Kaiser O."/>
            <person name="Goesmann A."/>
        </authorList>
    </citation>
    <scope>NUCLEOTIDE SEQUENCE [LARGE SCALE GENOMIC DNA]</scope>
    <source>
        <strain>BH72</strain>
    </source>
</reference>
<protein>
    <recommendedName>
        <fullName evidence="1">Glutamate--tRNA ligase</fullName>
        <ecNumber evidence="1">6.1.1.17</ecNumber>
    </recommendedName>
    <alternativeName>
        <fullName evidence="1">Glutamyl-tRNA synthetase</fullName>
        <shortName evidence="1">GluRS</shortName>
    </alternativeName>
</protein>